<proteinExistence type="inferred from homology"/>
<feature type="signal peptide">
    <location>
        <begin position="1"/>
        <end position="20"/>
    </location>
</feature>
<feature type="chain" id="PRO_0000025267" description="Outer membrane protein P2">
    <location>
        <begin position="21"/>
        <end position="367"/>
    </location>
</feature>
<protein>
    <recommendedName>
        <fullName>Outer membrane protein P2</fullName>
        <shortName>OMP P2</shortName>
    </recommendedName>
</protein>
<dbReference type="EMBL" id="X73390">
    <property type="protein sequence ID" value="CAA51807.1"/>
    <property type="molecule type" value="Genomic_DNA"/>
</dbReference>
<dbReference type="SMR" id="Q48219"/>
<dbReference type="GO" id="GO:0009279">
    <property type="term" value="C:cell outer membrane"/>
    <property type="evidence" value="ECO:0007669"/>
    <property type="project" value="UniProtKB-SubCell"/>
</dbReference>
<dbReference type="GO" id="GO:0046930">
    <property type="term" value="C:pore complex"/>
    <property type="evidence" value="ECO:0007669"/>
    <property type="project" value="UniProtKB-KW"/>
</dbReference>
<dbReference type="GO" id="GO:0015288">
    <property type="term" value="F:porin activity"/>
    <property type="evidence" value="ECO:0007669"/>
    <property type="project" value="UniProtKB-KW"/>
</dbReference>
<dbReference type="GO" id="GO:0006811">
    <property type="term" value="P:monoatomic ion transport"/>
    <property type="evidence" value="ECO:0007669"/>
    <property type="project" value="UniProtKB-KW"/>
</dbReference>
<dbReference type="CDD" id="cd00342">
    <property type="entry name" value="gram_neg_porins"/>
    <property type="match status" value="1"/>
</dbReference>
<dbReference type="Gene3D" id="2.40.160.10">
    <property type="entry name" value="Porin"/>
    <property type="match status" value="1"/>
</dbReference>
<dbReference type="InterPro" id="IPR050298">
    <property type="entry name" value="Gram-neg_bact_OMP"/>
</dbReference>
<dbReference type="InterPro" id="IPR033900">
    <property type="entry name" value="Gram_neg_porin_domain"/>
</dbReference>
<dbReference type="InterPro" id="IPR023614">
    <property type="entry name" value="Porin_dom_sf"/>
</dbReference>
<dbReference type="PANTHER" id="PTHR34501:SF2">
    <property type="entry name" value="OUTER MEMBRANE PORIN F-RELATED"/>
    <property type="match status" value="1"/>
</dbReference>
<dbReference type="PANTHER" id="PTHR34501">
    <property type="entry name" value="PROTEIN YDDL-RELATED"/>
    <property type="match status" value="1"/>
</dbReference>
<dbReference type="Pfam" id="PF13609">
    <property type="entry name" value="Porin_4"/>
    <property type="match status" value="1"/>
</dbReference>
<dbReference type="SUPFAM" id="SSF56935">
    <property type="entry name" value="Porins"/>
    <property type="match status" value="1"/>
</dbReference>
<organism>
    <name type="scientific">Haemophilus influenzae</name>
    <dbReference type="NCBI Taxonomy" id="727"/>
    <lineage>
        <taxon>Bacteria</taxon>
        <taxon>Pseudomonadati</taxon>
        <taxon>Pseudomonadota</taxon>
        <taxon>Gammaproteobacteria</taxon>
        <taxon>Pasteurellales</taxon>
        <taxon>Pasteurellaceae</taxon>
        <taxon>Haemophilus</taxon>
    </lineage>
</organism>
<reference key="1">
    <citation type="journal article" date="1993" name="Microb. Pathog.">
        <title>Genetic analysis of the diversity in outer membrane protein P2 of non-encapsulated Haemophilus influenzae.</title>
        <authorList>
            <person name="Duim B."/>
            <person name="Dankert J."/>
            <person name="Jansen H.M."/>
            <person name="van Alphen L."/>
        </authorList>
    </citation>
    <scope>NUCLEOTIDE SEQUENCE [GENOMIC DNA]</scope>
    <source>
        <strain>3224A</strain>
    </source>
</reference>
<comment type="function">
    <text evidence="1">Forms pores that allow passive diffusion of small molecules across the outer membrane.</text>
</comment>
<comment type="subunit">
    <text evidence="1">Homotrimer.</text>
</comment>
<comment type="subcellular location">
    <subcellularLocation>
        <location>Cell outer membrane</location>
        <topology>Multi-pass membrane protein</topology>
    </subcellularLocation>
</comment>
<comment type="similarity">
    <text evidence="2">Belongs to the Gram-negative porin family.</text>
</comment>
<gene>
    <name type="primary">ompP2</name>
</gene>
<keyword id="KW-0998">Cell outer membrane</keyword>
<keyword id="KW-0406">Ion transport</keyword>
<keyword id="KW-0472">Membrane</keyword>
<keyword id="KW-0626">Porin</keyword>
<keyword id="KW-0732">Signal</keyword>
<keyword id="KW-0812">Transmembrane</keyword>
<keyword id="KW-1134">Transmembrane beta strand</keyword>
<keyword id="KW-0813">Transport</keyword>
<name>OPP2A_HAEIF</name>
<evidence type="ECO:0000250" key="1"/>
<evidence type="ECO:0000305" key="2"/>
<accession>Q48219</accession>
<sequence length="367" mass="40019">MKKTLAALIVGAFAASAANAAVVYNNEGTNVELGGRLSIIAEQSNSTIKDQKQQHGALRNQSSRFHIKATHNFGDGFYAQGYLETRLVSAQSGTESDNFGHIITKYAYVTLGNKAFGEVKLGRAKTIADGITSAEDKEYGVLNNSKYIPTNGNTVGYTFKGIDGLVLGANYLLAQERYKYGGAAGGAGGAGAVAGEVYPQKISNGVQVGAKYDANNIIAGIAYGRTNYRESIHEKDLGKKQQVNGALSTLGYRFSDLGLLVSLDSGYAKTKNYKDKHEKSYFVSPGFQYELMEDTNFYGNFKYERNSVDQGKKEREQAVLFGIDHKLHKQVLTYIEGAYARTRTNDKSKAEKTEKEKSVGVGLRVYF</sequence>